<accession>C4V9G9</accession>
<feature type="chain" id="PRO_0000388424" description="Probable cytidylate kinase">
    <location>
        <begin position="1"/>
        <end position="217"/>
    </location>
</feature>
<feature type="binding site" evidence="1">
    <location>
        <begin position="9"/>
        <end position="17"/>
    </location>
    <ligand>
        <name>ATP</name>
        <dbReference type="ChEBI" id="CHEBI:30616"/>
    </ligand>
</feature>
<dbReference type="EC" id="2.7.4.25"/>
<dbReference type="EMBL" id="ACOL01000109">
    <property type="protein sequence ID" value="EEQ82133.1"/>
    <property type="molecule type" value="Genomic_DNA"/>
</dbReference>
<dbReference type="RefSeq" id="XP_002995804.1">
    <property type="nucleotide sequence ID" value="XM_002995758.1"/>
</dbReference>
<dbReference type="SMR" id="C4V9G9"/>
<dbReference type="STRING" id="578460.C4V9G9"/>
<dbReference type="KEGG" id="nce:NCER_101209"/>
<dbReference type="VEuPathDB" id="MicrosporidiaDB:NCER_101209"/>
<dbReference type="HOGENOM" id="CLU_079959_0_0_1"/>
<dbReference type="InParanoid" id="C4V9G9"/>
<dbReference type="OMA" id="RAITWWM"/>
<dbReference type="OrthoDB" id="4793at6029"/>
<dbReference type="Proteomes" id="UP000009082">
    <property type="component" value="Unassembled WGS sequence"/>
</dbReference>
<dbReference type="GO" id="GO:0005524">
    <property type="term" value="F:ATP binding"/>
    <property type="evidence" value="ECO:0007669"/>
    <property type="project" value="UniProtKB-KW"/>
</dbReference>
<dbReference type="GO" id="GO:0036430">
    <property type="term" value="F:CMP kinase activity"/>
    <property type="evidence" value="ECO:0007669"/>
    <property type="project" value="RHEA"/>
</dbReference>
<dbReference type="GO" id="GO:0036431">
    <property type="term" value="F:dCMP kinase activity"/>
    <property type="evidence" value="ECO:0007669"/>
    <property type="project" value="RHEA"/>
</dbReference>
<dbReference type="CDD" id="cd02020">
    <property type="entry name" value="CMPK"/>
    <property type="match status" value="1"/>
</dbReference>
<dbReference type="Gene3D" id="3.40.50.300">
    <property type="entry name" value="P-loop containing nucleotide triphosphate hydrolases"/>
    <property type="match status" value="1"/>
</dbReference>
<dbReference type="HAMAP" id="MF_00238">
    <property type="entry name" value="Cytidyl_kinase_type1"/>
    <property type="match status" value="1"/>
</dbReference>
<dbReference type="InterPro" id="IPR003136">
    <property type="entry name" value="Cytidylate_kin"/>
</dbReference>
<dbReference type="InterPro" id="IPR011994">
    <property type="entry name" value="Cytidylate_kinase_dom"/>
</dbReference>
<dbReference type="InterPro" id="IPR027417">
    <property type="entry name" value="P-loop_NTPase"/>
</dbReference>
<dbReference type="NCBIfam" id="TIGR00017">
    <property type="entry name" value="cmk"/>
    <property type="match status" value="1"/>
</dbReference>
<dbReference type="Pfam" id="PF02224">
    <property type="entry name" value="Cytidylate_kin"/>
    <property type="match status" value="1"/>
</dbReference>
<dbReference type="SUPFAM" id="SSF52540">
    <property type="entry name" value="P-loop containing nucleoside triphosphate hydrolases"/>
    <property type="match status" value="1"/>
</dbReference>
<comment type="catalytic activity">
    <reaction>
        <text>CMP + ATP = CDP + ADP</text>
        <dbReference type="Rhea" id="RHEA:11600"/>
        <dbReference type="ChEBI" id="CHEBI:30616"/>
        <dbReference type="ChEBI" id="CHEBI:58069"/>
        <dbReference type="ChEBI" id="CHEBI:60377"/>
        <dbReference type="ChEBI" id="CHEBI:456216"/>
        <dbReference type="EC" id="2.7.4.25"/>
    </reaction>
</comment>
<comment type="catalytic activity">
    <reaction>
        <text>dCMP + ATP = dCDP + ADP</text>
        <dbReference type="Rhea" id="RHEA:25094"/>
        <dbReference type="ChEBI" id="CHEBI:30616"/>
        <dbReference type="ChEBI" id="CHEBI:57566"/>
        <dbReference type="ChEBI" id="CHEBI:58593"/>
        <dbReference type="ChEBI" id="CHEBI:456216"/>
        <dbReference type="EC" id="2.7.4.25"/>
    </reaction>
</comment>
<comment type="similarity">
    <text evidence="2">Belongs to the cytidylate kinase family. Type 1 subfamily.</text>
</comment>
<gene>
    <name type="ORF">NCER_101209</name>
</gene>
<evidence type="ECO:0000250" key="1"/>
<evidence type="ECO:0000305" key="2"/>
<keyword id="KW-0067">ATP-binding</keyword>
<keyword id="KW-0418">Kinase</keyword>
<keyword id="KW-0547">Nucleotide-binding</keyword>
<keyword id="KW-1185">Reference proteome</keyword>
<keyword id="KW-0808">Transferase</keyword>
<sequence length="217" mass="24631">MVYKIAIDGPAGSGKSTTACLLRKRLGYKTINSGSIYRAVAYVLDSTFKNADLESKNIRDFVNLLDFDMFKDEILYNNHNISNYLRSKRIDEYVSLVAKKLYIRKKVGNLQNKFIKCSDTGIIIEGRDIGTNVLPDATLKIYLDASPKVRAKRRFLERPDISYEDTLAGIIERDYSDKTREHGALVVAEGAIIINTDDMSTEEVVDKIFDLFQNKIN</sequence>
<protein>
    <recommendedName>
        <fullName>Probable cytidylate kinase</fullName>
        <shortName>CK</shortName>
        <ecNumber>2.7.4.25</ecNumber>
    </recommendedName>
    <alternativeName>
        <fullName>Cytidine monophosphate kinase</fullName>
        <shortName>CMP kinase</shortName>
    </alternativeName>
</protein>
<reference key="1">
    <citation type="journal article" date="2009" name="PLoS Pathog.">
        <title>Genomic analyses of the microsporidian Nosema ceranae, an emergent pathogen of honey bees.</title>
        <authorList>
            <person name="Cornman R.S."/>
            <person name="Chen Y.P."/>
            <person name="Schatz M.C."/>
            <person name="Street C."/>
            <person name="Zhao Y."/>
            <person name="Desany B."/>
            <person name="Egholm M."/>
            <person name="Hutchison S."/>
            <person name="Pettis J.S."/>
            <person name="Lipkin W.I."/>
            <person name="Evans J.D."/>
        </authorList>
    </citation>
    <scope>NUCLEOTIDE SEQUENCE [LARGE SCALE GENOMIC DNA]</scope>
    <source>
        <strain>BRL01</strain>
    </source>
</reference>
<organism>
    <name type="scientific">Vairimorpha ceranae (strain BRL01)</name>
    <name type="common">Microsporidian parasite</name>
    <name type="synonym">Nosema ceranae</name>
    <dbReference type="NCBI Taxonomy" id="578460"/>
    <lineage>
        <taxon>Eukaryota</taxon>
        <taxon>Fungi</taxon>
        <taxon>Fungi incertae sedis</taxon>
        <taxon>Microsporidia</taxon>
        <taxon>Nosematidae</taxon>
        <taxon>Vairimorpha</taxon>
    </lineage>
</organism>
<proteinExistence type="inferred from homology"/>
<name>KCY_VAIC1</name>